<protein>
    <recommendedName>
        <fullName evidence="1">Small ribosomal subunit protein uS17</fullName>
    </recommendedName>
    <alternativeName>
        <fullName evidence="2">30S ribosomal protein S17</fullName>
    </alternativeName>
</protein>
<accession>Q9Z7R6</accession>
<accession>Q9JQG6</accession>
<comment type="function">
    <text evidence="1">One of the primary rRNA binding proteins, it binds specifically to the 5'-end of 16S ribosomal RNA.</text>
</comment>
<comment type="subunit">
    <text evidence="1">Part of the 30S ribosomal subunit.</text>
</comment>
<comment type="similarity">
    <text evidence="1">Belongs to the universal ribosomal protein uS17 family.</text>
</comment>
<reference key="1">
    <citation type="journal article" date="1999" name="Nat. Genet.">
        <title>Comparative genomes of Chlamydia pneumoniae and C. trachomatis.</title>
        <authorList>
            <person name="Kalman S."/>
            <person name="Mitchell W.P."/>
            <person name="Marathe R."/>
            <person name="Lammel C.J."/>
            <person name="Fan J."/>
            <person name="Hyman R.W."/>
            <person name="Olinger L."/>
            <person name="Grimwood J."/>
            <person name="Davis R.W."/>
            <person name="Stephens R.S."/>
        </authorList>
    </citation>
    <scope>NUCLEOTIDE SEQUENCE [LARGE SCALE GENOMIC DNA]</scope>
    <source>
        <strain>CWL029</strain>
    </source>
</reference>
<reference key="2">
    <citation type="journal article" date="2000" name="Nucleic Acids Res.">
        <title>Genome sequences of Chlamydia trachomatis MoPn and Chlamydia pneumoniae AR39.</title>
        <authorList>
            <person name="Read T.D."/>
            <person name="Brunham R.C."/>
            <person name="Shen C."/>
            <person name="Gill S.R."/>
            <person name="Heidelberg J.F."/>
            <person name="White O."/>
            <person name="Hickey E.K."/>
            <person name="Peterson J.D."/>
            <person name="Utterback T.R."/>
            <person name="Berry K.J."/>
            <person name="Bass S."/>
            <person name="Linher K.D."/>
            <person name="Weidman J.F."/>
            <person name="Khouri H.M."/>
            <person name="Craven B."/>
            <person name="Bowman C."/>
            <person name="Dodson R.J."/>
            <person name="Gwinn M.L."/>
            <person name="Nelson W.C."/>
            <person name="DeBoy R.T."/>
            <person name="Kolonay J.F."/>
            <person name="McClarty G."/>
            <person name="Salzberg S.L."/>
            <person name="Eisen J.A."/>
            <person name="Fraser C.M."/>
        </authorList>
    </citation>
    <scope>NUCLEOTIDE SEQUENCE [LARGE SCALE GENOMIC DNA]</scope>
    <source>
        <strain>AR39</strain>
    </source>
</reference>
<reference key="3">
    <citation type="journal article" date="2000" name="Nucleic Acids Res.">
        <title>Comparison of whole genome sequences of Chlamydia pneumoniae J138 from Japan and CWL029 from USA.</title>
        <authorList>
            <person name="Shirai M."/>
            <person name="Hirakawa H."/>
            <person name="Kimoto M."/>
            <person name="Tabuchi M."/>
            <person name="Kishi F."/>
            <person name="Ouchi K."/>
            <person name="Shiba T."/>
            <person name="Ishii K."/>
            <person name="Hattori M."/>
            <person name="Kuhara S."/>
            <person name="Nakazawa T."/>
        </authorList>
    </citation>
    <scope>NUCLEOTIDE SEQUENCE [LARGE SCALE GENOMIC DNA]</scope>
    <source>
        <strain>J138</strain>
    </source>
</reference>
<reference key="4">
    <citation type="submission" date="2002-05" db="EMBL/GenBank/DDBJ databases">
        <title>The genome sequence of Chlamydia pneumoniae TW183 and comparison with other Chlamydia strains based on whole genome sequence analysis.</title>
        <authorList>
            <person name="Geng M.M."/>
            <person name="Schuhmacher A."/>
            <person name="Muehldorfer I."/>
            <person name="Bensch K.W."/>
            <person name="Schaefer K.P."/>
            <person name="Schneider S."/>
            <person name="Pohl T."/>
            <person name="Essig A."/>
            <person name="Marre R."/>
            <person name="Melchers K."/>
        </authorList>
    </citation>
    <scope>NUCLEOTIDE SEQUENCE [LARGE SCALE GENOMIC DNA]</scope>
    <source>
        <strain>TW-183</strain>
    </source>
</reference>
<proteinExistence type="inferred from homology"/>
<name>RS17_CHLPN</name>
<organism>
    <name type="scientific">Chlamydia pneumoniae</name>
    <name type="common">Chlamydophila pneumoniae</name>
    <dbReference type="NCBI Taxonomy" id="83558"/>
    <lineage>
        <taxon>Bacteria</taxon>
        <taxon>Pseudomonadati</taxon>
        <taxon>Chlamydiota</taxon>
        <taxon>Chlamydiia</taxon>
        <taxon>Chlamydiales</taxon>
        <taxon>Chlamydiaceae</taxon>
        <taxon>Chlamydia/Chlamydophila group</taxon>
        <taxon>Chlamydia</taxon>
    </lineage>
</organism>
<sequence>MASEPRGSRKVKIGVVVSAKMEKTVVVRVERIFSHPQYLKVVRSSKKYYAHTELKVSEGDKVKIQETRPLSKLKRWRVIEHVGVVS</sequence>
<evidence type="ECO:0000255" key="1">
    <source>
        <dbReference type="HAMAP-Rule" id="MF_01345"/>
    </source>
</evidence>
<evidence type="ECO:0000305" key="2"/>
<gene>
    <name evidence="1" type="primary">rpsQ</name>
    <name type="synonym">rs17</name>
    <name type="ordered locus">CPn_0638</name>
    <name type="ordered locus">CP_0109</name>
    <name type="ordered locus">CpB0664</name>
</gene>
<feature type="chain" id="PRO_0000128454" description="Small ribosomal subunit protein uS17">
    <location>
        <begin position="1"/>
        <end position="86"/>
    </location>
</feature>
<dbReference type="EMBL" id="AE001363">
    <property type="protein sequence ID" value="AAD18777.1"/>
    <property type="molecule type" value="Genomic_DNA"/>
</dbReference>
<dbReference type="EMBL" id="AE002161">
    <property type="protein sequence ID" value="AAF37992.1"/>
    <property type="molecule type" value="Genomic_DNA"/>
</dbReference>
<dbReference type="EMBL" id="BA000008">
    <property type="protein sequence ID" value="BAA98845.1"/>
    <property type="molecule type" value="Genomic_DNA"/>
</dbReference>
<dbReference type="EMBL" id="AE009440">
    <property type="protein sequence ID" value="AAP98593.1"/>
    <property type="molecule type" value="Genomic_DNA"/>
</dbReference>
<dbReference type="PIR" id="C86570">
    <property type="entry name" value="C86570"/>
</dbReference>
<dbReference type="PIR" id="H72054">
    <property type="entry name" value="H72054"/>
</dbReference>
<dbReference type="RefSeq" id="NP_224834.1">
    <property type="nucleotide sequence ID" value="NC_000922.1"/>
</dbReference>
<dbReference type="RefSeq" id="WP_010883276.1">
    <property type="nucleotide sequence ID" value="NZ_LN847257.1"/>
</dbReference>
<dbReference type="SMR" id="Q9Z7R6"/>
<dbReference type="STRING" id="406984.CPK_ORF00038"/>
<dbReference type="GeneID" id="45050688"/>
<dbReference type="KEGG" id="cpa:CP_0109"/>
<dbReference type="KEGG" id="cpj:rs17"/>
<dbReference type="KEGG" id="cpn:CPn_0638"/>
<dbReference type="KEGG" id="cpt:CpB0664"/>
<dbReference type="PATRIC" id="fig|115713.3.peg.708"/>
<dbReference type="eggNOG" id="COG0186">
    <property type="taxonomic scope" value="Bacteria"/>
</dbReference>
<dbReference type="HOGENOM" id="CLU_073626_1_0_0"/>
<dbReference type="OMA" id="HPMYGKF"/>
<dbReference type="OrthoDB" id="9811714at2"/>
<dbReference type="Proteomes" id="UP000000583">
    <property type="component" value="Chromosome"/>
</dbReference>
<dbReference type="Proteomes" id="UP000000801">
    <property type="component" value="Chromosome"/>
</dbReference>
<dbReference type="GO" id="GO:0022627">
    <property type="term" value="C:cytosolic small ribosomal subunit"/>
    <property type="evidence" value="ECO:0007669"/>
    <property type="project" value="TreeGrafter"/>
</dbReference>
<dbReference type="GO" id="GO:0019843">
    <property type="term" value="F:rRNA binding"/>
    <property type="evidence" value="ECO:0007669"/>
    <property type="project" value="UniProtKB-UniRule"/>
</dbReference>
<dbReference type="GO" id="GO:0003735">
    <property type="term" value="F:structural constituent of ribosome"/>
    <property type="evidence" value="ECO:0007669"/>
    <property type="project" value="InterPro"/>
</dbReference>
<dbReference type="GO" id="GO:0006412">
    <property type="term" value="P:translation"/>
    <property type="evidence" value="ECO:0007669"/>
    <property type="project" value="UniProtKB-UniRule"/>
</dbReference>
<dbReference type="CDD" id="cd00364">
    <property type="entry name" value="Ribosomal_uS17"/>
    <property type="match status" value="1"/>
</dbReference>
<dbReference type="Gene3D" id="2.40.50.140">
    <property type="entry name" value="Nucleic acid-binding proteins"/>
    <property type="match status" value="1"/>
</dbReference>
<dbReference type="HAMAP" id="MF_01345_B">
    <property type="entry name" value="Ribosomal_uS17_B"/>
    <property type="match status" value="1"/>
</dbReference>
<dbReference type="InterPro" id="IPR012340">
    <property type="entry name" value="NA-bd_OB-fold"/>
</dbReference>
<dbReference type="InterPro" id="IPR000266">
    <property type="entry name" value="Ribosomal_uS17"/>
</dbReference>
<dbReference type="InterPro" id="IPR019984">
    <property type="entry name" value="Ribosomal_uS17_bact/chlr"/>
</dbReference>
<dbReference type="InterPro" id="IPR019979">
    <property type="entry name" value="Ribosomal_uS17_CS"/>
</dbReference>
<dbReference type="NCBIfam" id="NF004123">
    <property type="entry name" value="PRK05610.1"/>
    <property type="match status" value="1"/>
</dbReference>
<dbReference type="NCBIfam" id="TIGR03635">
    <property type="entry name" value="uS17_bact"/>
    <property type="match status" value="1"/>
</dbReference>
<dbReference type="PANTHER" id="PTHR10744">
    <property type="entry name" value="40S RIBOSOMAL PROTEIN S11 FAMILY MEMBER"/>
    <property type="match status" value="1"/>
</dbReference>
<dbReference type="PANTHER" id="PTHR10744:SF1">
    <property type="entry name" value="SMALL RIBOSOMAL SUBUNIT PROTEIN US17M"/>
    <property type="match status" value="1"/>
</dbReference>
<dbReference type="Pfam" id="PF00366">
    <property type="entry name" value="Ribosomal_S17"/>
    <property type="match status" value="1"/>
</dbReference>
<dbReference type="PRINTS" id="PR00973">
    <property type="entry name" value="RIBOSOMALS17"/>
</dbReference>
<dbReference type="SUPFAM" id="SSF50249">
    <property type="entry name" value="Nucleic acid-binding proteins"/>
    <property type="match status" value="1"/>
</dbReference>
<dbReference type="PROSITE" id="PS00056">
    <property type="entry name" value="RIBOSOMAL_S17"/>
    <property type="match status" value="1"/>
</dbReference>
<keyword id="KW-0687">Ribonucleoprotein</keyword>
<keyword id="KW-0689">Ribosomal protein</keyword>
<keyword id="KW-0694">RNA-binding</keyword>
<keyword id="KW-0699">rRNA-binding</keyword>